<evidence type="ECO:0000250" key="1">
    <source>
        <dbReference type="UniProtKB" id="O32449"/>
    </source>
</evidence>
<evidence type="ECO:0000250" key="2">
    <source>
        <dbReference type="UniProtKB" id="P46542"/>
    </source>
</evidence>
<evidence type="ECO:0000250" key="3">
    <source>
        <dbReference type="UniProtKB" id="P96084"/>
    </source>
</evidence>
<evidence type="ECO:0000255" key="4"/>
<evidence type="ECO:0000312" key="5">
    <source>
        <dbReference type="EMBL" id="ABS36268.1"/>
    </source>
</evidence>
<evidence type="ECO:0000312" key="6">
    <source>
        <dbReference type="EMBL" id="CAL83573.1"/>
    </source>
</evidence>
<comment type="function">
    <text evidence="2">Releases the N-terminal proline from various substrates.</text>
</comment>
<comment type="catalytic activity">
    <reaction evidence="2">
        <text>Release of N-terminal proline from a peptide.</text>
        <dbReference type="EC" id="3.4.11.5"/>
    </reaction>
</comment>
<comment type="similarity">
    <text evidence="4">Belongs to the peptidase S33 family.</text>
</comment>
<reference evidence="6" key="1">
    <citation type="journal article" date="2007" name="Genome Res.">
        <title>Genome sequence of a proteolytic (Group I) Clostridium botulinum strain Hall A and comparative analysis of the clostridial genomes.</title>
        <authorList>
            <person name="Sebaihia M."/>
            <person name="Peck M.W."/>
            <person name="Minton N.P."/>
            <person name="Thomson N.R."/>
            <person name="Holden M.T.G."/>
            <person name="Mitchell W.J."/>
            <person name="Carter A.T."/>
            <person name="Bentley S.D."/>
            <person name="Mason D.R."/>
            <person name="Crossman L."/>
            <person name="Paul C.J."/>
            <person name="Ivens A."/>
            <person name="Wells-Bennik M.H.J."/>
            <person name="Davis I.J."/>
            <person name="Cerdeno-Tarraga A.M."/>
            <person name="Churcher C."/>
            <person name="Quail M.A."/>
            <person name="Chillingworth T."/>
            <person name="Feltwell T."/>
            <person name="Fraser A."/>
            <person name="Goodhead I."/>
            <person name="Hance Z."/>
            <person name="Jagels K."/>
            <person name="Larke N."/>
            <person name="Maddison M."/>
            <person name="Moule S."/>
            <person name="Mungall K."/>
            <person name="Norbertczak H."/>
            <person name="Rabbinowitsch E."/>
            <person name="Sanders M."/>
            <person name="Simmonds M."/>
            <person name="White B."/>
            <person name="Whithead S."/>
            <person name="Parkhill J."/>
        </authorList>
    </citation>
    <scope>NUCLEOTIDE SEQUENCE [LARGE SCALE GENOMIC DNA]</scope>
    <source>
        <strain>Hall / ATCC 3502 / NCTC 13319 / Type A</strain>
    </source>
</reference>
<reference evidence="5" key="2">
    <citation type="journal article" date="2007" name="PLoS ONE">
        <title>Analysis of the neurotoxin complex genes in Clostridium botulinum A1-A4 and B1 strains: BoNT/A3, /Ba4 and /B1 clusters are located within plasmids.</title>
        <authorList>
            <person name="Smith T.J."/>
            <person name="Hill K.K."/>
            <person name="Foley B.T."/>
            <person name="Detter J.C."/>
            <person name="Munk A.C."/>
            <person name="Bruce D.C."/>
            <person name="Doggett N.A."/>
            <person name="Smith L.A."/>
            <person name="Marks J.D."/>
            <person name="Xie G."/>
            <person name="Brettin T.S."/>
        </authorList>
    </citation>
    <scope>NUCLEOTIDE SEQUENCE [LARGE SCALE GENOMIC DNA]</scope>
    <source>
        <strain>Hall / ATCC 3502 / NCTC 13319 / Type A</strain>
    </source>
</reference>
<protein>
    <recommendedName>
        <fullName evidence="6">Proline iminopeptidase</fullName>
        <shortName evidence="2">PIP</shortName>
        <ecNumber>3.4.11.5</ecNumber>
    </recommendedName>
    <alternativeName>
        <fullName evidence="5">Prolyl aminopeptidase</fullName>
        <shortName evidence="2">PAP</shortName>
    </alternativeName>
</protein>
<sequence>MKITEGYMPYLEYKTYYRIVGECTGNKKPLVLLHGGPGSTHNYFEVLDKVAEDGRAVIMYDQLGCGLSATPSRPDLWNAKTWIEELIQLRKHLGLDEIHLLGQSWGGMQAIQYACEYKPEGIKSYILSSTLPAASLWEKEQRRRVAYLPQEMQDAIAKAEKAGDYSSKEYQEAEAEFMLRHCAGAVGPDSPECLRRPKVAGTEAYVTAWGQNEFSPSGTLKNFDFMKEIEDIKEPCLITSGLLDLCSPLVAKTMYDKIPNSEWELFEFSRHMPFVEENEKYIEVLNKWLNKND</sequence>
<name>PIP_CLOBH</name>
<feature type="chain" id="PRO_0000406317" description="Proline iminopeptidase">
    <location>
        <begin position="1"/>
        <end position="293"/>
    </location>
</feature>
<feature type="domain" description="AB hydrolase-1" evidence="4">
    <location>
        <begin position="28"/>
        <end position="277"/>
    </location>
</feature>
<feature type="active site" description="Nucleophile" evidence="3">
    <location>
        <position position="104"/>
    </location>
</feature>
<feature type="active site" evidence="1">
    <location>
        <position position="244"/>
    </location>
</feature>
<feature type="active site" description="Proton donor" evidence="3">
    <location>
        <position position="271"/>
    </location>
</feature>
<organism>
    <name type="scientific">Clostridium botulinum (strain Hall / ATCC 3502 / NCTC 13319 / Type A)</name>
    <dbReference type="NCBI Taxonomy" id="441771"/>
    <lineage>
        <taxon>Bacteria</taxon>
        <taxon>Bacillati</taxon>
        <taxon>Bacillota</taxon>
        <taxon>Clostridia</taxon>
        <taxon>Eubacteriales</taxon>
        <taxon>Clostridiaceae</taxon>
        <taxon>Clostridium</taxon>
    </lineage>
</organism>
<gene>
    <name evidence="2" type="primary">pip</name>
    <name evidence="6" type="synonym">pepIP</name>
    <name type="ordered locus">CBO2031</name>
    <name type="ordered locus">CLC_1977</name>
</gene>
<accession>A5I3F5</accession>
<accession>A7G4W3</accession>
<proteinExistence type="inferred from homology"/>
<keyword id="KW-0031">Aminopeptidase</keyword>
<keyword id="KW-0378">Hydrolase</keyword>
<keyword id="KW-0645">Protease</keyword>
<keyword id="KW-1185">Reference proteome</keyword>
<dbReference type="EC" id="3.4.11.5"/>
<dbReference type="EMBL" id="AM412317">
    <property type="protein sequence ID" value="CAL83573.1"/>
    <property type="molecule type" value="Genomic_DNA"/>
</dbReference>
<dbReference type="EMBL" id="CP000727">
    <property type="protein sequence ID" value="ABS36268.1"/>
    <property type="molecule type" value="Genomic_DNA"/>
</dbReference>
<dbReference type="RefSeq" id="YP_001254533.1">
    <property type="nucleotide sequence ID" value="NC_009495.1"/>
</dbReference>
<dbReference type="RefSeq" id="YP_001387828.1">
    <property type="nucleotide sequence ID" value="NC_009698.1"/>
</dbReference>
<dbReference type="SMR" id="A5I3F5"/>
<dbReference type="ESTHER" id="clobh-pip">
    <property type="family name" value="Proline_iminopeptidase"/>
</dbReference>
<dbReference type="MEROPS" id="S33.021"/>
<dbReference type="GeneID" id="5186286"/>
<dbReference type="KEGG" id="cbh:CLC_1977"/>
<dbReference type="KEGG" id="cbo:CBO2031"/>
<dbReference type="PATRIC" id="fig|413999.7.peg.2003"/>
<dbReference type="HOGENOM" id="CLU_020336_15_1_9"/>
<dbReference type="PRO" id="PR:A5I3F5"/>
<dbReference type="Proteomes" id="UP000001986">
    <property type="component" value="Chromosome"/>
</dbReference>
<dbReference type="GO" id="GO:0004177">
    <property type="term" value="F:aminopeptidase activity"/>
    <property type="evidence" value="ECO:0007669"/>
    <property type="project" value="UniProtKB-KW"/>
</dbReference>
<dbReference type="GO" id="GO:0016787">
    <property type="term" value="F:hydrolase activity"/>
    <property type="evidence" value="ECO:0000318"/>
    <property type="project" value="GO_Central"/>
</dbReference>
<dbReference type="GO" id="GO:0006508">
    <property type="term" value="P:proteolysis"/>
    <property type="evidence" value="ECO:0007669"/>
    <property type="project" value="UniProtKB-KW"/>
</dbReference>
<dbReference type="Gene3D" id="3.40.50.1820">
    <property type="entry name" value="alpha/beta hydrolase"/>
    <property type="match status" value="1"/>
</dbReference>
<dbReference type="InterPro" id="IPR000073">
    <property type="entry name" value="AB_hydrolase_1"/>
</dbReference>
<dbReference type="InterPro" id="IPR029058">
    <property type="entry name" value="AB_hydrolase_fold"/>
</dbReference>
<dbReference type="InterPro" id="IPR050266">
    <property type="entry name" value="AB_hydrolase_sf"/>
</dbReference>
<dbReference type="InterPro" id="IPR002410">
    <property type="entry name" value="Peptidase_S33"/>
</dbReference>
<dbReference type="InterPro" id="IPR005945">
    <property type="entry name" value="Pro_imino_pep"/>
</dbReference>
<dbReference type="NCBIfam" id="TIGR01250">
    <property type="entry name" value="pro_imino_pep_2"/>
    <property type="match status" value="1"/>
</dbReference>
<dbReference type="NCBIfam" id="NF045945">
    <property type="entry name" value="ProImpepLactob"/>
    <property type="match status" value="1"/>
</dbReference>
<dbReference type="PANTHER" id="PTHR43798:SF31">
    <property type="entry name" value="AB HYDROLASE SUPERFAMILY PROTEIN YCLE"/>
    <property type="match status" value="1"/>
</dbReference>
<dbReference type="PANTHER" id="PTHR43798">
    <property type="entry name" value="MONOACYLGLYCEROL LIPASE"/>
    <property type="match status" value="1"/>
</dbReference>
<dbReference type="Pfam" id="PF00561">
    <property type="entry name" value="Abhydrolase_1"/>
    <property type="match status" value="1"/>
</dbReference>
<dbReference type="PIRSF" id="PIRSF005539">
    <property type="entry name" value="Pept_S33_TRI_F1"/>
    <property type="match status" value="1"/>
</dbReference>
<dbReference type="PRINTS" id="PR00793">
    <property type="entry name" value="PROAMNOPTASE"/>
</dbReference>
<dbReference type="SUPFAM" id="SSF53474">
    <property type="entry name" value="alpha/beta-Hydrolases"/>
    <property type="match status" value="1"/>
</dbReference>